<protein>
    <recommendedName>
        <fullName evidence="1">Recombination protein RecR</fullName>
    </recommendedName>
</protein>
<proteinExistence type="inferred from homology"/>
<sequence length="197" mass="21646">MIHFSRSLTRLLGELKKLPGVGDKTALRLAFHLLKSPDNLTALAESLLEVKAGVRFCSVCFGITEDDPCHLCSTERDRTTICVVEEPQDILAMERSRAFKGRYHVLHGALSPLNGITPGDLKIAELMKRLESGAIREVLIATNFTVEGEATALYLTRLIKPLSIRVTRLAHGIPLGSDLEFIDAATVQRAVEGRSEL</sequence>
<dbReference type="EMBL" id="CP001390">
    <property type="protein sequence ID" value="ACM18745.1"/>
    <property type="molecule type" value="Genomic_DNA"/>
</dbReference>
<dbReference type="RefSeq" id="WP_012645474.1">
    <property type="nucleotide sequence ID" value="NC_011979.1"/>
</dbReference>
<dbReference type="SMR" id="B9LZ13"/>
<dbReference type="STRING" id="316067.Geob_0376"/>
<dbReference type="KEGG" id="geo:Geob_0376"/>
<dbReference type="eggNOG" id="COG0353">
    <property type="taxonomic scope" value="Bacteria"/>
</dbReference>
<dbReference type="HOGENOM" id="CLU_060739_1_0_7"/>
<dbReference type="OrthoDB" id="9802672at2"/>
<dbReference type="Proteomes" id="UP000007721">
    <property type="component" value="Chromosome"/>
</dbReference>
<dbReference type="GO" id="GO:0003677">
    <property type="term" value="F:DNA binding"/>
    <property type="evidence" value="ECO:0007669"/>
    <property type="project" value="UniProtKB-UniRule"/>
</dbReference>
<dbReference type="GO" id="GO:0008270">
    <property type="term" value="F:zinc ion binding"/>
    <property type="evidence" value="ECO:0007669"/>
    <property type="project" value="UniProtKB-KW"/>
</dbReference>
<dbReference type="GO" id="GO:0006310">
    <property type="term" value="P:DNA recombination"/>
    <property type="evidence" value="ECO:0007669"/>
    <property type="project" value="UniProtKB-UniRule"/>
</dbReference>
<dbReference type="GO" id="GO:0006281">
    <property type="term" value="P:DNA repair"/>
    <property type="evidence" value="ECO:0007669"/>
    <property type="project" value="UniProtKB-UniRule"/>
</dbReference>
<dbReference type="CDD" id="cd01025">
    <property type="entry name" value="TOPRIM_recR"/>
    <property type="match status" value="1"/>
</dbReference>
<dbReference type="Gene3D" id="3.30.60.80">
    <property type="match status" value="1"/>
</dbReference>
<dbReference type="Gene3D" id="3.40.1360.10">
    <property type="match status" value="1"/>
</dbReference>
<dbReference type="Gene3D" id="6.10.250.240">
    <property type="match status" value="1"/>
</dbReference>
<dbReference type="Gene3D" id="1.10.8.420">
    <property type="entry name" value="RecR Domain 1"/>
    <property type="match status" value="1"/>
</dbReference>
<dbReference type="HAMAP" id="MF_00017">
    <property type="entry name" value="RecR"/>
    <property type="match status" value="1"/>
</dbReference>
<dbReference type="InterPro" id="IPR000093">
    <property type="entry name" value="DNA_Rcmb_RecR"/>
</dbReference>
<dbReference type="InterPro" id="IPR023627">
    <property type="entry name" value="Rcmb_RecR"/>
</dbReference>
<dbReference type="InterPro" id="IPR015967">
    <property type="entry name" value="Rcmb_RecR_Znf"/>
</dbReference>
<dbReference type="InterPro" id="IPR006171">
    <property type="entry name" value="TOPRIM_dom"/>
</dbReference>
<dbReference type="InterPro" id="IPR034137">
    <property type="entry name" value="TOPRIM_RecR"/>
</dbReference>
<dbReference type="NCBIfam" id="TIGR00615">
    <property type="entry name" value="recR"/>
    <property type="match status" value="1"/>
</dbReference>
<dbReference type="PANTHER" id="PTHR30446">
    <property type="entry name" value="RECOMBINATION PROTEIN RECR"/>
    <property type="match status" value="1"/>
</dbReference>
<dbReference type="PANTHER" id="PTHR30446:SF0">
    <property type="entry name" value="RECOMBINATION PROTEIN RECR"/>
    <property type="match status" value="1"/>
</dbReference>
<dbReference type="Pfam" id="PF21175">
    <property type="entry name" value="RecR_C"/>
    <property type="match status" value="1"/>
</dbReference>
<dbReference type="Pfam" id="PF21176">
    <property type="entry name" value="RecR_HhH"/>
    <property type="match status" value="1"/>
</dbReference>
<dbReference type="Pfam" id="PF02132">
    <property type="entry name" value="RecR_ZnF"/>
    <property type="match status" value="1"/>
</dbReference>
<dbReference type="Pfam" id="PF13662">
    <property type="entry name" value="Toprim_4"/>
    <property type="match status" value="1"/>
</dbReference>
<dbReference type="SMART" id="SM00493">
    <property type="entry name" value="TOPRIM"/>
    <property type="match status" value="1"/>
</dbReference>
<dbReference type="SUPFAM" id="SSF111304">
    <property type="entry name" value="Recombination protein RecR"/>
    <property type="match status" value="1"/>
</dbReference>
<dbReference type="PROSITE" id="PS50880">
    <property type="entry name" value="TOPRIM"/>
    <property type="match status" value="1"/>
</dbReference>
<feature type="chain" id="PRO_1000195392" description="Recombination protein RecR">
    <location>
        <begin position="1"/>
        <end position="197"/>
    </location>
</feature>
<feature type="domain" description="Toprim" evidence="1">
    <location>
        <begin position="79"/>
        <end position="174"/>
    </location>
</feature>
<feature type="zinc finger region" description="C4-type" evidence="1">
    <location>
        <begin position="57"/>
        <end position="72"/>
    </location>
</feature>
<reference key="1">
    <citation type="submission" date="2009-01" db="EMBL/GenBank/DDBJ databases">
        <title>Complete sequence of Geobacter sp. FRC-32.</title>
        <authorList>
            <consortium name="US DOE Joint Genome Institute"/>
            <person name="Lucas S."/>
            <person name="Copeland A."/>
            <person name="Lapidus A."/>
            <person name="Glavina del Rio T."/>
            <person name="Dalin E."/>
            <person name="Tice H."/>
            <person name="Bruce D."/>
            <person name="Goodwin L."/>
            <person name="Pitluck S."/>
            <person name="Saunders E."/>
            <person name="Brettin T."/>
            <person name="Detter J.C."/>
            <person name="Han C."/>
            <person name="Larimer F."/>
            <person name="Land M."/>
            <person name="Hauser L."/>
            <person name="Kyrpides N."/>
            <person name="Ovchinnikova G."/>
            <person name="Kostka J."/>
            <person name="Richardson P."/>
        </authorList>
    </citation>
    <scope>NUCLEOTIDE SEQUENCE [LARGE SCALE GENOMIC DNA]</scope>
    <source>
        <strain>DSM 22248 / JCM 15807 / FRC-32</strain>
    </source>
</reference>
<keyword id="KW-0227">DNA damage</keyword>
<keyword id="KW-0233">DNA recombination</keyword>
<keyword id="KW-0234">DNA repair</keyword>
<keyword id="KW-0479">Metal-binding</keyword>
<keyword id="KW-1185">Reference proteome</keyword>
<keyword id="KW-0862">Zinc</keyword>
<keyword id="KW-0863">Zinc-finger</keyword>
<gene>
    <name evidence="1" type="primary">recR</name>
    <name type="ordered locus">Geob_0376</name>
</gene>
<organism>
    <name type="scientific">Geotalea daltonii (strain DSM 22248 / JCM 15807 / FRC-32)</name>
    <name type="common">Geobacter daltonii</name>
    <dbReference type="NCBI Taxonomy" id="316067"/>
    <lineage>
        <taxon>Bacteria</taxon>
        <taxon>Pseudomonadati</taxon>
        <taxon>Thermodesulfobacteriota</taxon>
        <taxon>Desulfuromonadia</taxon>
        <taxon>Geobacterales</taxon>
        <taxon>Geobacteraceae</taxon>
        <taxon>Geotalea</taxon>
    </lineage>
</organism>
<comment type="function">
    <text evidence="1">May play a role in DNA repair. It seems to be involved in an RecBC-independent recombinational process of DNA repair. It may act with RecF and RecO.</text>
</comment>
<comment type="similarity">
    <text evidence="1">Belongs to the RecR family.</text>
</comment>
<name>RECR_GEODF</name>
<accession>B9LZ13</accession>
<evidence type="ECO:0000255" key="1">
    <source>
        <dbReference type="HAMAP-Rule" id="MF_00017"/>
    </source>
</evidence>